<feature type="chain" id="PRO_0000286951" description="Uncharacterized membrane protein in llm 5'region">
    <location>
        <begin position="1"/>
        <end position="356"/>
    </location>
</feature>
<feature type="transmembrane region" description="Helical" evidence="1">
    <location>
        <begin position="2"/>
        <end position="22"/>
    </location>
</feature>
<feature type="transmembrane region" description="Helical" evidence="1">
    <location>
        <begin position="35"/>
        <end position="55"/>
    </location>
</feature>
<feature type="transmembrane region" description="Helical" evidence="1">
    <location>
        <begin position="74"/>
        <end position="94"/>
    </location>
</feature>
<feature type="transmembrane region" description="Helical" evidence="1">
    <location>
        <begin position="99"/>
        <end position="119"/>
    </location>
</feature>
<feature type="transmembrane region" description="Helical" evidence="1">
    <location>
        <begin position="124"/>
        <end position="144"/>
    </location>
</feature>
<feature type="transmembrane region" description="Helical" evidence="1">
    <location>
        <begin position="154"/>
        <end position="174"/>
    </location>
</feature>
<feature type="domain" description="GGDEF" evidence="2">
    <location>
        <begin position="218"/>
        <end position="353"/>
    </location>
</feature>
<evidence type="ECO:0000255" key="1"/>
<evidence type="ECO:0000255" key="2">
    <source>
        <dbReference type="PROSITE-ProRule" id="PRU00095"/>
    </source>
</evidence>
<evidence type="ECO:0000305" key="3"/>
<comment type="subcellular location">
    <subcellularLocation>
        <location evidence="3">Cell membrane</location>
        <topology evidence="3">Multi-pass membrane protein</topology>
    </subcellularLocation>
</comment>
<keyword id="KW-1003">Cell membrane</keyword>
<keyword id="KW-0472">Membrane</keyword>
<keyword id="KW-0812">Transmembrane</keyword>
<keyword id="KW-1133">Transmembrane helix</keyword>
<sequence>MFEAFIYNISVIVAGIYLFHRLQYSENKRMVFSKAYVTVLMTIVSLLLSVYPIPYREDYLIHLTFVPLLFLGRFTNMVYTLSATVIVAIVEIVVFNNSIMYGVTLIVIAAVTSAIGPFLKQNDVLSLLILNVVTIIILFGVALVSPIYTLSEVIILIPISLIITLASAITFVDIWHFFSLVNRYENEDKYDYLTGLGNVKEFDRHLNEISRKAEKEHQSIALLLIDIDGFKDVNDTYSHKSGDAVLKQMSQLLKNYVPNQFKIFRNGGEEFSVVIHNYSLDQSVKLAENIRSGVEKSSFHLPNKEVIKLSVSIGVGYLTDDDPKSQRKVFKDADDMVHVAKNQGRNKVMFNPIINL</sequence>
<reference key="1">
    <citation type="submission" date="1997-01" db="EMBL/GenBank/DDBJ databases">
        <title>Upstream region of llm gene.</title>
        <authorList>
            <person name="Maki H."/>
        </authorList>
    </citation>
    <scope>NUCLEOTIDE SEQUENCE [GENOMIC DNA]</scope>
    <source>
        <strain>SRM551</strain>
    </source>
</reference>
<name>YLLM_STAAU</name>
<proteinExistence type="predicted"/>
<organism>
    <name type="scientific">Staphylococcus aureus</name>
    <dbReference type="NCBI Taxonomy" id="1280"/>
    <lineage>
        <taxon>Bacteria</taxon>
        <taxon>Bacillati</taxon>
        <taxon>Bacillota</taxon>
        <taxon>Bacilli</taxon>
        <taxon>Bacillales</taxon>
        <taxon>Staphylococcaceae</taxon>
        <taxon>Staphylococcus</taxon>
    </lineage>
</organism>
<accession>Q7DLB7</accession>
<protein>
    <recommendedName>
        <fullName>Uncharacterized membrane protein in llm 5'region</fullName>
    </recommendedName>
    <alternativeName>
        <fullName>ORF1</fullName>
    </alternativeName>
</protein>
<dbReference type="EMBL" id="AB000542">
    <property type="protein sequence ID" value="BAB62079.1"/>
    <property type="molecule type" value="Genomic_DNA"/>
</dbReference>
<dbReference type="RefSeq" id="WP_000460983.1">
    <property type="nucleotide sequence ID" value="NZ_WYDB01000004.1"/>
</dbReference>
<dbReference type="SMR" id="Q7DLB7"/>
<dbReference type="OMA" id="GASVQMM"/>
<dbReference type="GO" id="GO:0005886">
    <property type="term" value="C:plasma membrane"/>
    <property type="evidence" value="ECO:0007669"/>
    <property type="project" value="UniProtKB-SubCell"/>
</dbReference>
<dbReference type="GO" id="GO:0052621">
    <property type="term" value="F:diguanylate cyclase activity"/>
    <property type="evidence" value="ECO:0007669"/>
    <property type="project" value="TreeGrafter"/>
</dbReference>
<dbReference type="GO" id="GO:0000155">
    <property type="term" value="F:phosphorelay sensor kinase activity"/>
    <property type="evidence" value="ECO:0007669"/>
    <property type="project" value="InterPro"/>
</dbReference>
<dbReference type="GO" id="GO:0043709">
    <property type="term" value="P:cell adhesion involved in single-species biofilm formation"/>
    <property type="evidence" value="ECO:0007669"/>
    <property type="project" value="TreeGrafter"/>
</dbReference>
<dbReference type="GO" id="GO:0071555">
    <property type="term" value="P:cell wall organization"/>
    <property type="evidence" value="ECO:0007669"/>
    <property type="project" value="InterPro"/>
</dbReference>
<dbReference type="GO" id="GO:1902201">
    <property type="term" value="P:negative regulation of bacterial-type flagellum-dependent cell motility"/>
    <property type="evidence" value="ECO:0007669"/>
    <property type="project" value="TreeGrafter"/>
</dbReference>
<dbReference type="CDD" id="cd01949">
    <property type="entry name" value="GGDEF"/>
    <property type="match status" value="1"/>
</dbReference>
<dbReference type="FunFam" id="3.30.70.270:FF:000038">
    <property type="entry name" value="Diguanylate cyclase domain protein"/>
    <property type="match status" value="1"/>
</dbReference>
<dbReference type="Gene3D" id="3.30.70.270">
    <property type="match status" value="1"/>
</dbReference>
<dbReference type="InterPro" id="IPR050469">
    <property type="entry name" value="Diguanylate_Cyclase"/>
</dbReference>
<dbReference type="InterPro" id="IPR000160">
    <property type="entry name" value="GGDEF_dom"/>
</dbReference>
<dbReference type="InterPro" id="IPR029787">
    <property type="entry name" value="Nucleotide_cyclase"/>
</dbReference>
<dbReference type="InterPro" id="IPR043128">
    <property type="entry name" value="Rev_trsase/Diguanyl_cyclase"/>
</dbReference>
<dbReference type="InterPro" id="IPR011620">
    <property type="entry name" value="Sig_transdc_His_kinase_LytS_TM"/>
</dbReference>
<dbReference type="NCBIfam" id="TIGR00254">
    <property type="entry name" value="GGDEF"/>
    <property type="match status" value="1"/>
</dbReference>
<dbReference type="PANTHER" id="PTHR45138:SF9">
    <property type="entry name" value="DIGUANYLATE CYCLASE DGCM-RELATED"/>
    <property type="match status" value="1"/>
</dbReference>
<dbReference type="PANTHER" id="PTHR45138">
    <property type="entry name" value="REGULATORY COMPONENTS OF SENSORY TRANSDUCTION SYSTEM"/>
    <property type="match status" value="1"/>
</dbReference>
<dbReference type="Pfam" id="PF07694">
    <property type="entry name" value="5TM-5TMR_LYT"/>
    <property type="match status" value="1"/>
</dbReference>
<dbReference type="Pfam" id="PF00990">
    <property type="entry name" value="GGDEF"/>
    <property type="match status" value="1"/>
</dbReference>
<dbReference type="SMART" id="SM00267">
    <property type="entry name" value="GGDEF"/>
    <property type="match status" value="1"/>
</dbReference>
<dbReference type="SUPFAM" id="SSF55073">
    <property type="entry name" value="Nucleotide cyclase"/>
    <property type="match status" value="1"/>
</dbReference>
<dbReference type="PROSITE" id="PS50887">
    <property type="entry name" value="GGDEF"/>
    <property type="match status" value="1"/>
</dbReference>